<accession>Q1I6Z8</accession>
<organism>
    <name type="scientific">Pseudomonas entomophila (strain L48)</name>
    <dbReference type="NCBI Taxonomy" id="384676"/>
    <lineage>
        <taxon>Bacteria</taxon>
        <taxon>Pseudomonadati</taxon>
        <taxon>Pseudomonadota</taxon>
        <taxon>Gammaproteobacteria</taxon>
        <taxon>Pseudomonadales</taxon>
        <taxon>Pseudomonadaceae</taxon>
        <taxon>Pseudomonas</taxon>
    </lineage>
</organism>
<reference key="1">
    <citation type="journal article" date="2006" name="Nat. Biotechnol.">
        <title>Complete genome sequence of the entomopathogenic and metabolically versatile soil bacterium Pseudomonas entomophila.</title>
        <authorList>
            <person name="Vodovar N."/>
            <person name="Vallenet D."/>
            <person name="Cruveiller S."/>
            <person name="Rouy Z."/>
            <person name="Barbe V."/>
            <person name="Acosta C."/>
            <person name="Cattolico L."/>
            <person name="Jubin C."/>
            <person name="Lajus A."/>
            <person name="Segurens B."/>
            <person name="Vacherie B."/>
            <person name="Wincker P."/>
            <person name="Weissenbach J."/>
            <person name="Lemaitre B."/>
            <person name="Medigue C."/>
            <person name="Boccard F."/>
        </authorList>
    </citation>
    <scope>NUCLEOTIDE SEQUENCE [LARGE SCALE GENOMIC DNA]</scope>
    <source>
        <strain>L48</strain>
    </source>
</reference>
<dbReference type="EC" id="6.1.1.7" evidence="1"/>
<dbReference type="EMBL" id="CT573326">
    <property type="protein sequence ID" value="CAK16584.1"/>
    <property type="molecule type" value="Genomic_DNA"/>
</dbReference>
<dbReference type="RefSeq" id="WP_011534959.1">
    <property type="nucleotide sequence ID" value="NC_008027.1"/>
</dbReference>
<dbReference type="SMR" id="Q1I6Z8"/>
<dbReference type="STRING" id="384676.PSEEN3875"/>
<dbReference type="GeneID" id="32806913"/>
<dbReference type="KEGG" id="pen:PSEEN3875"/>
<dbReference type="eggNOG" id="COG0013">
    <property type="taxonomic scope" value="Bacteria"/>
</dbReference>
<dbReference type="HOGENOM" id="CLU_004485_1_1_6"/>
<dbReference type="OrthoDB" id="9803884at2"/>
<dbReference type="Proteomes" id="UP000000658">
    <property type="component" value="Chromosome"/>
</dbReference>
<dbReference type="GO" id="GO:0005829">
    <property type="term" value="C:cytosol"/>
    <property type="evidence" value="ECO:0007669"/>
    <property type="project" value="TreeGrafter"/>
</dbReference>
<dbReference type="GO" id="GO:0004813">
    <property type="term" value="F:alanine-tRNA ligase activity"/>
    <property type="evidence" value="ECO:0007669"/>
    <property type="project" value="UniProtKB-UniRule"/>
</dbReference>
<dbReference type="GO" id="GO:0002161">
    <property type="term" value="F:aminoacyl-tRNA deacylase activity"/>
    <property type="evidence" value="ECO:0007669"/>
    <property type="project" value="TreeGrafter"/>
</dbReference>
<dbReference type="GO" id="GO:0005524">
    <property type="term" value="F:ATP binding"/>
    <property type="evidence" value="ECO:0007669"/>
    <property type="project" value="UniProtKB-UniRule"/>
</dbReference>
<dbReference type="GO" id="GO:0000049">
    <property type="term" value="F:tRNA binding"/>
    <property type="evidence" value="ECO:0007669"/>
    <property type="project" value="UniProtKB-KW"/>
</dbReference>
<dbReference type="GO" id="GO:0008270">
    <property type="term" value="F:zinc ion binding"/>
    <property type="evidence" value="ECO:0007669"/>
    <property type="project" value="UniProtKB-UniRule"/>
</dbReference>
<dbReference type="GO" id="GO:0006419">
    <property type="term" value="P:alanyl-tRNA aminoacylation"/>
    <property type="evidence" value="ECO:0007669"/>
    <property type="project" value="UniProtKB-UniRule"/>
</dbReference>
<dbReference type="GO" id="GO:0045892">
    <property type="term" value="P:negative regulation of DNA-templated transcription"/>
    <property type="evidence" value="ECO:0007669"/>
    <property type="project" value="TreeGrafter"/>
</dbReference>
<dbReference type="CDD" id="cd00673">
    <property type="entry name" value="AlaRS_core"/>
    <property type="match status" value="1"/>
</dbReference>
<dbReference type="FunFam" id="2.40.30.130:FF:000001">
    <property type="entry name" value="Alanine--tRNA ligase"/>
    <property type="match status" value="1"/>
</dbReference>
<dbReference type="FunFam" id="3.10.310.40:FF:000001">
    <property type="entry name" value="Alanine--tRNA ligase"/>
    <property type="match status" value="1"/>
</dbReference>
<dbReference type="FunFam" id="3.30.54.20:FF:000001">
    <property type="entry name" value="Alanine--tRNA ligase"/>
    <property type="match status" value="1"/>
</dbReference>
<dbReference type="FunFam" id="3.30.930.10:FF:000004">
    <property type="entry name" value="Alanine--tRNA ligase"/>
    <property type="match status" value="1"/>
</dbReference>
<dbReference type="FunFam" id="3.30.980.10:FF:000004">
    <property type="entry name" value="Alanine--tRNA ligase, cytoplasmic"/>
    <property type="match status" value="1"/>
</dbReference>
<dbReference type="Gene3D" id="2.40.30.130">
    <property type="match status" value="1"/>
</dbReference>
<dbReference type="Gene3D" id="3.10.310.40">
    <property type="match status" value="1"/>
</dbReference>
<dbReference type="Gene3D" id="3.30.54.20">
    <property type="match status" value="1"/>
</dbReference>
<dbReference type="Gene3D" id="6.10.250.550">
    <property type="match status" value="1"/>
</dbReference>
<dbReference type="Gene3D" id="3.30.930.10">
    <property type="entry name" value="Bira Bifunctional Protein, Domain 2"/>
    <property type="match status" value="1"/>
</dbReference>
<dbReference type="Gene3D" id="3.30.980.10">
    <property type="entry name" value="Threonyl-trna Synthetase, Chain A, domain 2"/>
    <property type="match status" value="1"/>
</dbReference>
<dbReference type="HAMAP" id="MF_00036_B">
    <property type="entry name" value="Ala_tRNA_synth_B"/>
    <property type="match status" value="1"/>
</dbReference>
<dbReference type="InterPro" id="IPR045864">
    <property type="entry name" value="aa-tRNA-synth_II/BPL/LPL"/>
</dbReference>
<dbReference type="InterPro" id="IPR002318">
    <property type="entry name" value="Ala-tRNA-lgiase_IIc"/>
</dbReference>
<dbReference type="InterPro" id="IPR018162">
    <property type="entry name" value="Ala-tRNA-ligase_IIc_anticod-bd"/>
</dbReference>
<dbReference type="InterPro" id="IPR018165">
    <property type="entry name" value="Ala-tRNA-synth_IIc_core"/>
</dbReference>
<dbReference type="InterPro" id="IPR018164">
    <property type="entry name" value="Ala-tRNA-synth_IIc_N"/>
</dbReference>
<dbReference type="InterPro" id="IPR050058">
    <property type="entry name" value="Ala-tRNA_ligase"/>
</dbReference>
<dbReference type="InterPro" id="IPR023033">
    <property type="entry name" value="Ala_tRNA_ligase_euk/bac"/>
</dbReference>
<dbReference type="InterPro" id="IPR003156">
    <property type="entry name" value="DHHA1_dom"/>
</dbReference>
<dbReference type="InterPro" id="IPR018163">
    <property type="entry name" value="Thr/Ala-tRNA-synth_IIc_edit"/>
</dbReference>
<dbReference type="InterPro" id="IPR009000">
    <property type="entry name" value="Transl_B-barrel_sf"/>
</dbReference>
<dbReference type="InterPro" id="IPR012947">
    <property type="entry name" value="tRNA_SAD"/>
</dbReference>
<dbReference type="NCBIfam" id="TIGR00344">
    <property type="entry name" value="alaS"/>
    <property type="match status" value="1"/>
</dbReference>
<dbReference type="PANTHER" id="PTHR11777:SF9">
    <property type="entry name" value="ALANINE--TRNA LIGASE, CYTOPLASMIC"/>
    <property type="match status" value="1"/>
</dbReference>
<dbReference type="PANTHER" id="PTHR11777">
    <property type="entry name" value="ALANYL-TRNA SYNTHETASE"/>
    <property type="match status" value="1"/>
</dbReference>
<dbReference type="Pfam" id="PF02272">
    <property type="entry name" value="DHHA1"/>
    <property type="match status" value="1"/>
</dbReference>
<dbReference type="Pfam" id="PF01411">
    <property type="entry name" value="tRNA-synt_2c"/>
    <property type="match status" value="1"/>
</dbReference>
<dbReference type="Pfam" id="PF07973">
    <property type="entry name" value="tRNA_SAD"/>
    <property type="match status" value="1"/>
</dbReference>
<dbReference type="PRINTS" id="PR00980">
    <property type="entry name" value="TRNASYNTHALA"/>
</dbReference>
<dbReference type="SMART" id="SM00863">
    <property type="entry name" value="tRNA_SAD"/>
    <property type="match status" value="1"/>
</dbReference>
<dbReference type="SUPFAM" id="SSF55681">
    <property type="entry name" value="Class II aaRS and biotin synthetases"/>
    <property type="match status" value="1"/>
</dbReference>
<dbReference type="SUPFAM" id="SSF101353">
    <property type="entry name" value="Putative anticodon-binding domain of alanyl-tRNA synthetase (AlaRS)"/>
    <property type="match status" value="1"/>
</dbReference>
<dbReference type="SUPFAM" id="SSF55186">
    <property type="entry name" value="ThrRS/AlaRS common domain"/>
    <property type="match status" value="1"/>
</dbReference>
<dbReference type="SUPFAM" id="SSF50447">
    <property type="entry name" value="Translation proteins"/>
    <property type="match status" value="1"/>
</dbReference>
<dbReference type="PROSITE" id="PS50860">
    <property type="entry name" value="AA_TRNA_LIGASE_II_ALA"/>
    <property type="match status" value="1"/>
</dbReference>
<keyword id="KW-0030">Aminoacyl-tRNA synthetase</keyword>
<keyword id="KW-0067">ATP-binding</keyword>
<keyword id="KW-0963">Cytoplasm</keyword>
<keyword id="KW-0436">Ligase</keyword>
<keyword id="KW-0479">Metal-binding</keyword>
<keyword id="KW-0547">Nucleotide-binding</keyword>
<keyword id="KW-0648">Protein biosynthesis</keyword>
<keyword id="KW-0694">RNA-binding</keyword>
<keyword id="KW-0820">tRNA-binding</keyword>
<keyword id="KW-0862">Zinc</keyword>
<feature type="chain" id="PRO_0000347737" description="Alanine--tRNA ligase">
    <location>
        <begin position="1"/>
        <end position="874"/>
    </location>
</feature>
<feature type="binding site" evidence="1">
    <location>
        <position position="562"/>
    </location>
    <ligand>
        <name>Zn(2+)</name>
        <dbReference type="ChEBI" id="CHEBI:29105"/>
    </ligand>
</feature>
<feature type="binding site" evidence="1">
    <location>
        <position position="566"/>
    </location>
    <ligand>
        <name>Zn(2+)</name>
        <dbReference type="ChEBI" id="CHEBI:29105"/>
    </ligand>
</feature>
<feature type="binding site" evidence="1">
    <location>
        <position position="665"/>
    </location>
    <ligand>
        <name>Zn(2+)</name>
        <dbReference type="ChEBI" id="CHEBI:29105"/>
    </ligand>
</feature>
<feature type="binding site" evidence="1">
    <location>
        <position position="669"/>
    </location>
    <ligand>
        <name>Zn(2+)</name>
        <dbReference type="ChEBI" id="CHEBI:29105"/>
    </ligand>
</feature>
<name>SYA_PSEE4</name>
<evidence type="ECO:0000255" key="1">
    <source>
        <dbReference type="HAMAP-Rule" id="MF_00036"/>
    </source>
</evidence>
<sequence>MKSAEIREAFLRFFEEQGHTRVASSSLIPGNDPTLLFTNAGMNQFKDCFLGQEKRAYTRAVSSQKCVRAGGKHNDLENVGYTARHHTFFEMLGNFSFGDYFKRDAITFAWNFLTSDKWLNLPKEKLWVTVYASDDEAYDIWTQEVGVPAERMVRIGDNKGAPYASDNFWTMGDTGPCGPCTEIFYDHGPDIWGGPPGSPEEDGDRYIEIWNNVFMQFNRTADGVLHPLPAPSVDTGMGLERISAVMQHVHSNYEIDLFQSLLAAAAEAIGCSNDEQPSLKVVADHIRSCGFLIADGVLPSNEGRGYVLRRIIRRACRHGNKLGAKGSFFHKIVAALVTEMGEAFPELKGQQAHIERVLKTEEEQFAKTLEQGLRILEQDLAQLQGKVVPGDVVFKLYDTYGFPMDLTGDIARERELTIDEAGFEREMEAQRERARSASAFGMDYNSLVKVDTATDFLGYDTTEGQGKVIALYKDGQSVEQLTEGEEGVVVLDRTPFYAESGGQVGDSGYLQAGAARFDVRDTTKTGGAFLHHGVIASGALTVGATVDARVDADVQHATSLNHSATHLLHEALRQVLGEHVQQKGSLVDSQRLRFDFSHFEAVKPEQIKALEDIVNREVRRNTEVQTELTDIETAKAKGAMALFGEKYGDTVRVLSMGGDFSVELCGGIHAKRTGDISLFKIISEGGVASGVRRIEAITGAAALAYLNAAEEQVKEAAQLVKGNRDNLIDKLSAVLERNRQLEKQLEQLQAKAASAAGDDLSNAAVEVKGAKVLAARLDGQDGKALLALVDQLKNKLGHAVILLGSEHEGKVVLVAGVTKDLSGQLKAGDLMKQAAAVVGGKGGGRPDMAQGGGVDVASLDQALALAVPFAEQGL</sequence>
<gene>
    <name evidence="1" type="primary">alaS</name>
    <name type="ordered locus">PSEEN3875</name>
</gene>
<protein>
    <recommendedName>
        <fullName evidence="1">Alanine--tRNA ligase</fullName>
        <ecNumber evidence="1">6.1.1.7</ecNumber>
    </recommendedName>
    <alternativeName>
        <fullName evidence="1">Alanyl-tRNA synthetase</fullName>
        <shortName evidence="1">AlaRS</shortName>
    </alternativeName>
</protein>
<comment type="function">
    <text evidence="1">Catalyzes the attachment of alanine to tRNA(Ala) in a two-step reaction: alanine is first activated by ATP to form Ala-AMP and then transferred to the acceptor end of tRNA(Ala). Also edits incorrectly charged Ser-tRNA(Ala) and Gly-tRNA(Ala) via its editing domain.</text>
</comment>
<comment type="catalytic activity">
    <reaction evidence="1">
        <text>tRNA(Ala) + L-alanine + ATP = L-alanyl-tRNA(Ala) + AMP + diphosphate</text>
        <dbReference type="Rhea" id="RHEA:12540"/>
        <dbReference type="Rhea" id="RHEA-COMP:9657"/>
        <dbReference type="Rhea" id="RHEA-COMP:9923"/>
        <dbReference type="ChEBI" id="CHEBI:30616"/>
        <dbReference type="ChEBI" id="CHEBI:33019"/>
        <dbReference type="ChEBI" id="CHEBI:57972"/>
        <dbReference type="ChEBI" id="CHEBI:78442"/>
        <dbReference type="ChEBI" id="CHEBI:78497"/>
        <dbReference type="ChEBI" id="CHEBI:456215"/>
        <dbReference type="EC" id="6.1.1.7"/>
    </reaction>
</comment>
<comment type="cofactor">
    <cofactor evidence="1">
        <name>Zn(2+)</name>
        <dbReference type="ChEBI" id="CHEBI:29105"/>
    </cofactor>
    <text evidence="1">Binds 1 zinc ion per subunit.</text>
</comment>
<comment type="subcellular location">
    <subcellularLocation>
        <location evidence="1">Cytoplasm</location>
    </subcellularLocation>
</comment>
<comment type="domain">
    <text evidence="1">Consists of three domains; the N-terminal catalytic domain, the editing domain and the C-terminal C-Ala domain. The editing domain removes incorrectly charged amino acids, while the C-Ala domain, along with tRNA(Ala), serves as a bridge to cooperatively bring together the editing and aminoacylation centers thus stimulating deacylation of misacylated tRNAs.</text>
</comment>
<comment type="similarity">
    <text evidence="1">Belongs to the class-II aminoacyl-tRNA synthetase family.</text>
</comment>
<proteinExistence type="inferred from homology"/>